<comment type="function">
    <text evidence="4">Salivary chemokine-binding protein which binds to host chemokines CXCL1, CXCL2, CXCL3, CXCL5 and CXCL8.</text>
</comment>
<comment type="subcellular location">
    <subcellularLocation>
        <location evidence="6">Secreted</location>
    </subcellularLocation>
</comment>
<accession>A0A0K8RDJ1</accession>
<keyword id="KW-1015">Disulfide bond</keyword>
<keyword id="KW-0325">Glycoprotein</keyword>
<keyword id="KW-0964">Secreted</keyword>
<keyword id="KW-0732">Signal</keyword>
<dbReference type="EMBL" id="GADI01004687">
    <property type="protein sequence ID" value="JAA69121.1"/>
    <property type="molecule type" value="mRNA"/>
</dbReference>
<dbReference type="GO" id="GO:0005576">
    <property type="term" value="C:extracellular region"/>
    <property type="evidence" value="ECO:0007669"/>
    <property type="project" value="UniProtKB-SubCell"/>
</dbReference>
<dbReference type="GO" id="GO:0019958">
    <property type="term" value="F:C-X-C chemokine binding"/>
    <property type="evidence" value="ECO:0000314"/>
    <property type="project" value="UniProtKB"/>
</dbReference>
<organism evidence="7">
    <name type="scientific">Ixodes ricinus</name>
    <name type="common">Common tick</name>
    <name type="synonym">Acarus ricinus</name>
    <dbReference type="NCBI Taxonomy" id="34613"/>
    <lineage>
        <taxon>Eukaryota</taxon>
        <taxon>Metazoa</taxon>
        <taxon>Ecdysozoa</taxon>
        <taxon>Arthropoda</taxon>
        <taxon>Chelicerata</taxon>
        <taxon>Arachnida</taxon>
        <taxon>Acari</taxon>
        <taxon>Parasitiformes</taxon>
        <taxon>Ixodida</taxon>
        <taxon>Ixodoidea</taxon>
        <taxon>Ixodidae</taxon>
        <taxon>Ixodinae</taxon>
        <taxon>Ixodes</taxon>
    </lineage>
</organism>
<protein>
    <recommendedName>
        <fullName evidence="5">Evasin P1162</fullName>
    </recommendedName>
</protein>
<evidence type="ECO:0000250" key="1">
    <source>
        <dbReference type="UniProtKB" id="P0C8E8"/>
    </source>
</evidence>
<evidence type="ECO:0000255" key="2"/>
<evidence type="ECO:0000255" key="3">
    <source>
        <dbReference type="PROSITE-ProRule" id="PRU00498"/>
    </source>
</evidence>
<evidence type="ECO:0000269" key="4">
    <source>
    </source>
</evidence>
<evidence type="ECO:0000303" key="5">
    <source>
    </source>
</evidence>
<evidence type="ECO:0000305" key="6"/>
<evidence type="ECO:0000312" key="7">
    <source>
        <dbReference type="EMBL" id="JAA69121.1"/>
    </source>
</evidence>
<reference evidence="7" key="1">
    <citation type="journal article" date="2013" name="FASEB J.">
        <title>De novo Ixodes ricinus salivary gland transcriptome analysis using two next-generation sequencing methodologies.</title>
        <authorList>
            <person name="Schwarz A."/>
            <person name="von Reumont B.M."/>
            <person name="Erhart J."/>
            <person name="Chagas A.C."/>
            <person name="Ribeiro J.M."/>
            <person name="Kotsyfakis M."/>
        </authorList>
    </citation>
    <scope>NUCLEOTIDE SEQUENCE [LARGE SCALE MRNA]</scope>
    <source>
        <tissue evidence="7">Salivary gland</tissue>
    </source>
</reference>
<reference evidence="6" key="2">
    <citation type="journal article" date="2019" name="J. Biol. Chem.">
        <title>A knottin scaffold directs the CXC-chemokine-binding specificity of tick evasins.</title>
        <authorList>
            <person name="Lee A.W."/>
            <person name="Deruaz M."/>
            <person name="Lynch C."/>
            <person name="Davies G."/>
            <person name="Singh K."/>
            <person name="Alenazi Y."/>
            <person name="Eaton J.R.O."/>
            <person name="Kawamura A."/>
            <person name="Shaw J."/>
            <person name="Proudfoot A.E.I."/>
            <person name="Dias J.M."/>
            <person name="Bhattacharya S."/>
        </authorList>
    </citation>
    <scope>FUNCTION</scope>
</reference>
<feature type="signal peptide" evidence="2">
    <location>
        <begin position="1"/>
        <end position="28"/>
    </location>
</feature>
<feature type="chain" id="PRO_5005517012" description="Evasin P1162" evidence="2">
    <location>
        <begin position="29"/>
        <end position="99"/>
    </location>
</feature>
<feature type="glycosylation site" description="N-linked (GlcNAc...) asparagine" evidence="3">
    <location>
        <position position="43"/>
    </location>
</feature>
<feature type="glycosylation site" description="N-linked (GlcNAc...) asparagine" evidence="3">
    <location>
        <position position="49"/>
    </location>
</feature>
<feature type="glycosylation site" description="N-linked (GlcNAc...) asparagine" evidence="3">
    <location>
        <position position="58"/>
    </location>
</feature>
<feature type="glycosylation site" description="N-linked (GlcNAc...) asparagine" evidence="3">
    <location>
        <position position="85"/>
    </location>
</feature>
<feature type="disulfide bond" evidence="1">
    <location>
        <begin position="40"/>
        <end position="59"/>
    </location>
</feature>
<feature type="disulfide bond" evidence="1">
    <location>
        <begin position="44"/>
        <end position="61"/>
    </location>
</feature>
<feature type="disulfide bond" evidence="1">
    <location>
        <begin position="55"/>
        <end position="72"/>
    </location>
</feature>
<sequence>MEVKTFAFLQIAVCIAIGIELICAGTNALNDEELFTVDYCGTNCTQQPNGSWTTCPGNCSCYHEDGKTDGFCLSTEYTDFTQFPNLTSEEMDAATPRPE</sequence>
<name>E1162_IXORI</name>
<proteinExistence type="inferred from homology"/>